<accession>Q17WC4</accession>
<keyword id="KW-0413">Isomerase</keyword>
<keyword id="KW-0663">Pyridoxal phosphate</keyword>
<comment type="function">
    <text evidence="1">Catalyzes the interconversion of L-alanine and D-alanine. May also act on other amino acids.</text>
</comment>
<comment type="catalytic activity">
    <reaction evidence="1">
        <text>L-alanine = D-alanine</text>
        <dbReference type="Rhea" id="RHEA:20249"/>
        <dbReference type="ChEBI" id="CHEBI:57416"/>
        <dbReference type="ChEBI" id="CHEBI:57972"/>
        <dbReference type="EC" id="5.1.1.1"/>
    </reaction>
</comment>
<comment type="cofactor">
    <cofactor evidence="1">
        <name>pyridoxal 5'-phosphate</name>
        <dbReference type="ChEBI" id="CHEBI:597326"/>
    </cofactor>
</comment>
<comment type="pathway">
    <text evidence="1">Amino-acid biosynthesis; D-alanine biosynthesis; D-alanine from L-alanine: step 1/1.</text>
</comment>
<comment type="similarity">
    <text evidence="1">Belongs to the alanine racemase family.</text>
</comment>
<evidence type="ECO:0000255" key="1">
    <source>
        <dbReference type="HAMAP-Rule" id="MF_01201"/>
    </source>
</evidence>
<dbReference type="EC" id="5.1.1.1" evidence="1"/>
<dbReference type="EMBL" id="AM260522">
    <property type="protein sequence ID" value="CAK00052.1"/>
    <property type="molecule type" value="Genomic_DNA"/>
</dbReference>
<dbReference type="RefSeq" id="WP_011578143.1">
    <property type="nucleotide sequence ID" value="NC_008229.1"/>
</dbReference>
<dbReference type="SMR" id="Q17WC4"/>
<dbReference type="STRING" id="382638.Hac_1313"/>
<dbReference type="GeneID" id="31758634"/>
<dbReference type="KEGG" id="hac:Hac_1313"/>
<dbReference type="eggNOG" id="COG0787">
    <property type="taxonomic scope" value="Bacteria"/>
</dbReference>
<dbReference type="HOGENOM" id="CLU_028393_2_2_7"/>
<dbReference type="OrthoDB" id="9813814at2"/>
<dbReference type="BioCyc" id="HACI382638:HAC_RS05630-MONOMER"/>
<dbReference type="UniPathway" id="UPA00042">
    <property type="reaction ID" value="UER00497"/>
</dbReference>
<dbReference type="Proteomes" id="UP000000775">
    <property type="component" value="Chromosome"/>
</dbReference>
<dbReference type="GO" id="GO:0005829">
    <property type="term" value="C:cytosol"/>
    <property type="evidence" value="ECO:0007669"/>
    <property type="project" value="TreeGrafter"/>
</dbReference>
<dbReference type="GO" id="GO:0008784">
    <property type="term" value="F:alanine racemase activity"/>
    <property type="evidence" value="ECO:0007669"/>
    <property type="project" value="UniProtKB-UniRule"/>
</dbReference>
<dbReference type="GO" id="GO:0030170">
    <property type="term" value="F:pyridoxal phosphate binding"/>
    <property type="evidence" value="ECO:0007669"/>
    <property type="project" value="UniProtKB-UniRule"/>
</dbReference>
<dbReference type="GO" id="GO:0030632">
    <property type="term" value="P:D-alanine biosynthetic process"/>
    <property type="evidence" value="ECO:0007669"/>
    <property type="project" value="UniProtKB-UniRule"/>
</dbReference>
<dbReference type="CDD" id="cd00430">
    <property type="entry name" value="PLPDE_III_AR"/>
    <property type="match status" value="1"/>
</dbReference>
<dbReference type="FunFam" id="3.20.20.10:FF:000002">
    <property type="entry name" value="Alanine racemase"/>
    <property type="match status" value="1"/>
</dbReference>
<dbReference type="Gene3D" id="3.20.20.10">
    <property type="entry name" value="Alanine racemase"/>
    <property type="match status" value="1"/>
</dbReference>
<dbReference type="Gene3D" id="2.40.37.10">
    <property type="entry name" value="Lyase, Ornithine Decarboxylase, Chain A, domain 1"/>
    <property type="match status" value="1"/>
</dbReference>
<dbReference type="HAMAP" id="MF_01201">
    <property type="entry name" value="Ala_racemase"/>
    <property type="match status" value="1"/>
</dbReference>
<dbReference type="InterPro" id="IPR000821">
    <property type="entry name" value="Ala_racemase"/>
</dbReference>
<dbReference type="InterPro" id="IPR009006">
    <property type="entry name" value="Ala_racemase/Decarboxylase_C"/>
</dbReference>
<dbReference type="InterPro" id="IPR011079">
    <property type="entry name" value="Ala_racemase_C"/>
</dbReference>
<dbReference type="InterPro" id="IPR001608">
    <property type="entry name" value="Ala_racemase_N"/>
</dbReference>
<dbReference type="InterPro" id="IPR029066">
    <property type="entry name" value="PLP-binding_barrel"/>
</dbReference>
<dbReference type="NCBIfam" id="TIGR00492">
    <property type="entry name" value="alr"/>
    <property type="match status" value="1"/>
</dbReference>
<dbReference type="PANTHER" id="PTHR30511">
    <property type="entry name" value="ALANINE RACEMASE"/>
    <property type="match status" value="1"/>
</dbReference>
<dbReference type="PANTHER" id="PTHR30511:SF0">
    <property type="entry name" value="ALANINE RACEMASE, CATABOLIC-RELATED"/>
    <property type="match status" value="1"/>
</dbReference>
<dbReference type="Pfam" id="PF00842">
    <property type="entry name" value="Ala_racemase_C"/>
    <property type="match status" value="1"/>
</dbReference>
<dbReference type="Pfam" id="PF01168">
    <property type="entry name" value="Ala_racemase_N"/>
    <property type="match status" value="1"/>
</dbReference>
<dbReference type="PRINTS" id="PR00992">
    <property type="entry name" value="ALARACEMASE"/>
</dbReference>
<dbReference type="SMART" id="SM01005">
    <property type="entry name" value="Ala_racemase_C"/>
    <property type="match status" value="1"/>
</dbReference>
<dbReference type="SUPFAM" id="SSF50621">
    <property type="entry name" value="Alanine racemase C-terminal domain-like"/>
    <property type="match status" value="1"/>
</dbReference>
<dbReference type="SUPFAM" id="SSF51419">
    <property type="entry name" value="PLP-binding barrel"/>
    <property type="match status" value="1"/>
</dbReference>
<name>ALR_HELAH</name>
<reference key="1">
    <citation type="journal article" date="2006" name="PLoS Genet.">
        <title>Who ate whom? Adaptive Helicobacter genomic changes that accompanied a host jump from early humans to large felines.</title>
        <authorList>
            <person name="Eppinger M."/>
            <person name="Baar C."/>
            <person name="Linz B."/>
            <person name="Raddatz G."/>
            <person name="Lanz C."/>
            <person name="Keller H."/>
            <person name="Morelli G."/>
            <person name="Gressmann H."/>
            <person name="Achtman M."/>
            <person name="Schuster S.C."/>
        </authorList>
    </citation>
    <scope>NUCLEOTIDE SEQUENCE [LARGE SCALE GENOMIC DNA]</scope>
    <source>
        <strain>Sheeba</strain>
    </source>
</reference>
<gene>
    <name type="primary">alr</name>
    <name type="ordered locus">Hac_1313</name>
</gene>
<organism>
    <name type="scientific">Helicobacter acinonychis (strain Sheeba)</name>
    <dbReference type="NCBI Taxonomy" id="382638"/>
    <lineage>
        <taxon>Bacteria</taxon>
        <taxon>Pseudomonadati</taxon>
        <taxon>Campylobacterota</taxon>
        <taxon>Epsilonproteobacteria</taxon>
        <taxon>Campylobacterales</taxon>
        <taxon>Helicobacteraceae</taxon>
        <taxon>Helicobacter</taxon>
    </lineage>
</organism>
<protein>
    <recommendedName>
        <fullName evidence="1">Alanine racemase</fullName>
        <ecNumber evidence="1">5.1.1.1</ecNumber>
    </recommendedName>
</protein>
<proteinExistence type="inferred from homology"/>
<sequence>MLRRASFVEVDTSSLRHNFHAAKNAIPKDAHIMAVVKANAYGVGALKASEVFLQEGAHYLGVATLDEALELRSCFPKTPILILGYSPNSNAQMLIDNNLTAMIFSLEQAGVFSQAALKSQKHLKVHLKIDTGMHRLGLEPNFKSIEMIKKIRALNGLEVEGIFTHLSNANANIKTHAKNQMKIFNAFLEQLLDQKIEFQYRHAYNSAGILSLCNNNENRFLNLYRPGIMLYGFYPSNEMKQSCQTILNNVVSLKAKIVQIKRVKKGEFVGYGKHFYTNEETLIGTLALGYADGLVRDLGNRIQVAINNQLAPLIGKVCMDQCFVKLDGIEAKEGDEVILFGDKSTKANDANEIAMLLNTIPYETISTLSKRLERVYV</sequence>
<feature type="chain" id="PRO_1000065992" description="Alanine racemase">
    <location>
        <begin position="1"/>
        <end position="377"/>
    </location>
</feature>
<feature type="active site" description="Proton acceptor; specific for D-alanine" evidence="1">
    <location>
        <position position="37"/>
    </location>
</feature>
<feature type="active site" description="Proton acceptor; specific for L-alanine" evidence="1">
    <location>
        <position position="271"/>
    </location>
</feature>
<feature type="binding site" evidence="1">
    <location>
        <position position="135"/>
    </location>
    <ligand>
        <name>substrate</name>
    </ligand>
</feature>
<feature type="binding site" evidence="1">
    <location>
        <position position="319"/>
    </location>
    <ligand>
        <name>substrate</name>
    </ligand>
</feature>
<feature type="modified residue" description="N6-(pyridoxal phosphate)lysine" evidence="1">
    <location>
        <position position="37"/>
    </location>
</feature>